<proteinExistence type="evidence at transcript level"/>
<reference key="1">
    <citation type="journal article" date="2004" name="Genome Res.">
        <title>The status, quality, and expansion of the NIH full-length cDNA project: the Mammalian Gene Collection (MGC).</title>
        <authorList>
            <consortium name="The MGC Project Team"/>
        </authorList>
    </citation>
    <scope>NUCLEOTIDE SEQUENCE [LARGE SCALE MRNA]</scope>
    <source>
        <tissue>Testis</tissue>
    </source>
</reference>
<gene>
    <name type="primary">Stpg2</name>
</gene>
<sequence length="563" mass="63424">MYDRAPRWLDLANRGSTEEHVGPGTYQVPFPKQQATGCYAPFLSLSSKKDAYVVSSDPGKAVPGPAHYNVSQAQYKIKGGRTLQNREKRFKKLISDGPGPASYDCPYLGTLCIRIRQKICRKPAVSRSLDIPSIPSSGKSHGYHLNEDDTIMRRTPPSSDKTMGPAYYNPQFDYPKASLKYKGVNFGIATGRQELLKYSGPGPGHYDIIQKRKLRYENINIKRDQEHYCYSYVPRLYEEIALQEEKKGVPGPGKYNIKSQFDHIKSMSTIVDASSLLFFPETERFEPIKSSTPAPGTYNETRTAFKVPKKRSGLFSPFGQRAARFTEDYKAHELPGPGFYDISTNIVKAQVKKPHLKKKMKTGFGSSVPRALFAVQEKAFAGPGPSDYQVVRGIHDELPNLMNKYAAFLSREERTTPVQEMSLPAPGCYDVQKSYDMSQVQHNYMPPRSSVAKQRHSSFLSAAPRCLGKISDGPGPATYNPILMKSGAIISFVKAPRRFEEFQDKFSPGPTTYELSPFFRHSLLKRTYNVTLPCSASLNREHAGHAVQKTRQKYQRERFKHPN</sequence>
<protein>
    <recommendedName>
        <fullName>Sperm-tail PG-rich repeat-containing protein 2</fullName>
    </recommendedName>
</protein>
<keyword id="KW-1185">Reference proteome</keyword>
<keyword id="KW-0677">Repeat</keyword>
<name>STPG2_RAT</name>
<feature type="chain" id="PRO_0000311962" description="Sperm-tail PG-rich repeat-containing protein 2">
    <location>
        <begin position="1"/>
        <end position="563"/>
    </location>
</feature>
<feature type="repeat" description="STPGR 1">
    <location>
        <begin position="21"/>
        <end position="34"/>
    </location>
</feature>
<feature type="repeat" description="STPGR 2">
    <location>
        <begin position="63"/>
        <end position="73"/>
    </location>
</feature>
<feature type="repeat" description="STPGR 3">
    <location>
        <begin position="97"/>
        <end position="107"/>
    </location>
</feature>
<feature type="repeat" description="STPGR 4">
    <location>
        <begin position="200"/>
        <end position="219"/>
    </location>
</feature>
<feature type="repeat" description="STPGR 5">
    <location>
        <begin position="250"/>
        <end position="263"/>
    </location>
</feature>
<feature type="repeat" description="STPGR 6">
    <location>
        <begin position="292"/>
        <end position="321"/>
    </location>
</feature>
<feature type="repeat" description="STPGR 7">
    <location>
        <begin position="334"/>
        <end position="353"/>
    </location>
</feature>
<feature type="repeat" description="STPGR 8">
    <location>
        <begin position="423"/>
        <end position="438"/>
    </location>
</feature>
<feature type="repeat" description="STPGR 9">
    <location>
        <begin position="473"/>
        <end position="483"/>
    </location>
</feature>
<feature type="repeat" description="STPGR 10">
    <location>
        <begin position="507"/>
        <end position="518"/>
    </location>
</feature>
<feature type="region of interest" description="Disordered" evidence="1">
    <location>
        <begin position="131"/>
        <end position="163"/>
    </location>
</feature>
<dbReference type="EMBL" id="BC128777">
    <property type="protein sequence ID" value="AAI28778.1"/>
    <property type="molecule type" value="mRNA"/>
</dbReference>
<dbReference type="RefSeq" id="NP_001094463.1">
    <property type="nucleotide sequence ID" value="NM_001100993.1"/>
</dbReference>
<dbReference type="RefSeq" id="XP_017446536.1">
    <property type="nucleotide sequence ID" value="XM_017591047.3"/>
</dbReference>
<dbReference type="FunCoup" id="A1A5R9">
    <property type="interactions" value="2"/>
</dbReference>
<dbReference type="STRING" id="10116.ENSRNOP00000031925"/>
<dbReference type="PhosphoSitePlus" id="A1A5R9"/>
<dbReference type="PaxDb" id="10116-ENSRNOP00000031925"/>
<dbReference type="Ensembl" id="ENSRNOT00000029382.5">
    <property type="protein sequence ID" value="ENSRNOP00000031925.4"/>
    <property type="gene ID" value="ENSRNOG00000023457.5"/>
</dbReference>
<dbReference type="Ensembl" id="ENSRNOT00000094402.1">
    <property type="protein sequence ID" value="ENSRNOP00000081550.1"/>
    <property type="gene ID" value="ENSRNOG00000023457.5"/>
</dbReference>
<dbReference type="GeneID" id="499719"/>
<dbReference type="KEGG" id="rno:499719"/>
<dbReference type="AGR" id="RGD:1591946"/>
<dbReference type="CTD" id="285555"/>
<dbReference type="RGD" id="1591946">
    <property type="gene designation" value="Stpg2"/>
</dbReference>
<dbReference type="eggNOG" id="KOG1198">
    <property type="taxonomic scope" value="Eukaryota"/>
</dbReference>
<dbReference type="GeneTree" id="ENSGT00390000001063"/>
<dbReference type="HOGENOM" id="CLU_040300_1_0_1"/>
<dbReference type="InParanoid" id="A1A5R9"/>
<dbReference type="OMA" id="NDPRHAL"/>
<dbReference type="OrthoDB" id="406368at2759"/>
<dbReference type="PhylomeDB" id="A1A5R9"/>
<dbReference type="TreeFam" id="TF328881"/>
<dbReference type="PRO" id="PR:A1A5R9"/>
<dbReference type="Proteomes" id="UP000002494">
    <property type="component" value="Chromosome 2"/>
</dbReference>
<dbReference type="Bgee" id="ENSRNOG00000023457">
    <property type="expression patterns" value="Expressed in testis and 1 other cell type or tissue"/>
</dbReference>
<dbReference type="InterPro" id="IPR051291">
    <property type="entry name" value="CIMAP"/>
</dbReference>
<dbReference type="InterPro" id="IPR010736">
    <property type="entry name" value="SHIPPO-rpt"/>
</dbReference>
<dbReference type="PANTHER" id="PTHR21580">
    <property type="entry name" value="SHIPPO-1-RELATED"/>
    <property type="match status" value="1"/>
</dbReference>
<dbReference type="PANTHER" id="PTHR21580:SF60">
    <property type="entry name" value="SPERM-TAIL PG-RICH REPEAT-CONTAINING PROTEIN 2"/>
    <property type="match status" value="1"/>
</dbReference>
<dbReference type="Pfam" id="PF07004">
    <property type="entry name" value="SHIPPO-rpt"/>
    <property type="match status" value="7"/>
</dbReference>
<accession>A1A5R9</accession>
<organism>
    <name type="scientific">Rattus norvegicus</name>
    <name type="common">Rat</name>
    <dbReference type="NCBI Taxonomy" id="10116"/>
    <lineage>
        <taxon>Eukaryota</taxon>
        <taxon>Metazoa</taxon>
        <taxon>Chordata</taxon>
        <taxon>Craniata</taxon>
        <taxon>Vertebrata</taxon>
        <taxon>Euteleostomi</taxon>
        <taxon>Mammalia</taxon>
        <taxon>Eutheria</taxon>
        <taxon>Euarchontoglires</taxon>
        <taxon>Glires</taxon>
        <taxon>Rodentia</taxon>
        <taxon>Myomorpha</taxon>
        <taxon>Muroidea</taxon>
        <taxon>Muridae</taxon>
        <taxon>Murinae</taxon>
        <taxon>Rattus</taxon>
    </lineage>
</organism>
<evidence type="ECO:0000256" key="1">
    <source>
        <dbReference type="SAM" id="MobiDB-lite"/>
    </source>
</evidence>